<feature type="chain" id="PRO_0000419959" description="Phosphatidylinositol:ceramide inositolphosphotransferase">
    <location>
        <begin position="1"/>
        <end position="326"/>
    </location>
</feature>
<feature type="transmembrane region" description="Helical" evidence="2">
    <location>
        <begin position="33"/>
        <end position="53"/>
    </location>
</feature>
<feature type="transmembrane region" description="Helical" evidence="2">
    <location>
        <begin position="82"/>
        <end position="102"/>
    </location>
</feature>
<feature type="transmembrane region" description="Helical" evidence="2">
    <location>
        <begin position="115"/>
        <end position="135"/>
    </location>
</feature>
<feature type="transmembrane region" description="Helical" evidence="2">
    <location>
        <begin position="169"/>
        <end position="189"/>
    </location>
</feature>
<feature type="transmembrane region" description="Helical" evidence="2">
    <location>
        <begin position="199"/>
        <end position="219"/>
    </location>
</feature>
<feature type="transmembrane region" description="Helical" evidence="2">
    <location>
        <begin position="222"/>
        <end position="242"/>
    </location>
</feature>
<feature type="region of interest" description="Disordered" evidence="3">
    <location>
        <begin position="306"/>
        <end position="326"/>
    </location>
</feature>
<feature type="compositionally biased region" description="Polar residues" evidence="3">
    <location>
        <begin position="316"/>
        <end position="326"/>
    </location>
</feature>
<feature type="active site" evidence="1">
    <location>
        <position position="181"/>
    </location>
</feature>
<feature type="active site" evidence="1">
    <location>
        <position position="222"/>
    </location>
</feature>
<feature type="active site" evidence="1">
    <location>
        <position position="226"/>
    </location>
</feature>
<comment type="function">
    <text evidence="1">Catalyzes the transfer of the phosphorylinositol group from phosphatidylinositol (PI) to phytoceramide, an essential step in sphingolipid biosynthesis. May play an important role in modulating plant programmed cell death (PCD) associated with defense (e.g. toward Golovinomyces cichoracearum) by promoting sphingolipid metabolism and regulating ceramide accumulation (By similarity).</text>
</comment>
<comment type="subcellular location">
    <subcellularLocation>
        <location evidence="1">Golgi apparatus</location>
        <location evidence="1">trans-Golgi network membrane</location>
        <topology evidence="1">Multi-pass membrane protein</topology>
    </subcellularLocation>
</comment>
<comment type="similarity">
    <text evidence="4">Belongs to the sphingomyelin synthase family.</text>
</comment>
<organism>
    <name type="scientific">Oryza sativa subsp. indica</name>
    <name type="common">Rice</name>
    <dbReference type="NCBI Taxonomy" id="39946"/>
    <lineage>
        <taxon>Eukaryota</taxon>
        <taxon>Viridiplantae</taxon>
        <taxon>Streptophyta</taxon>
        <taxon>Embryophyta</taxon>
        <taxon>Tracheophyta</taxon>
        <taxon>Spermatophyta</taxon>
        <taxon>Magnoliopsida</taxon>
        <taxon>Liliopsida</taxon>
        <taxon>Poales</taxon>
        <taxon>Poaceae</taxon>
        <taxon>BOP clade</taxon>
        <taxon>Oryzoideae</taxon>
        <taxon>Oryzeae</taxon>
        <taxon>Oryzinae</taxon>
        <taxon>Oryza</taxon>
        <taxon>Oryza sativa</taxon>
    </lineage>
</organism>
<name>IPCS_ORYSI</name>
<proteinExistence type="inferred from homology"/>
<keyword id="KW-0333">Golgi apparatus</keyword>
<keyword id="KW-0444">Lipid biosynthesis</keyword>
<keyword id="KW-0443">Lipid metabolism</keyword>
<keyword id="KW-0472">Membrane</keyword>
<keyword id="KW-0611">Plant defense</keyword>
<keyword id="KW-1185">Reference proteome</keyword>
<keyword id="KW-0746">Sphingolipid metabolism</keyword>
<keyword id="KW-0808">Transferase</keyword>
<keyword id="KW-0812">Transmembrane</keyword>
<keyword id="KW-1133">Transmembrane helix</keyword>
<sequence>MAVYIAREATKLWRKVCAEIAVELQLLFEKWRLLLAGLVFQYIHGLAARGVHYLHRPGPLLQDLGFMALPELGQDKGYVSESVFTFIFISFLLWSFHPFIYHSKRFYTVLLWRRVLAFLVASQFLRIITFYSTQLPGPNYHCREGSKMATLPPPHNVLEVLLINFPRGVLFGCGDLIFSSHMIFTLVFVRTYHKYGSKRLIKILAWLMAIIQSLLIIASRKHYSVDVVVAWYTVNLVVFFIDNKLPEMPDRTNGSSLLPVTAKDKDGRTKEELHKLEKDCKMKEEFHKLLNGNTVDSTDRRQRVQMNGKHGEDINHTLSDATPNGT</sequence>
<reference key="1">
    <citation type="journal article" date="2005" name="PLoS Biol.">
        <title>The genomes of Oryza sativa: a history of duplications.</title>
        <authorList>
            <person name="Yu J."/>
            <person name="Wang J."/>
            <person name="Lin W."/>
            <person name="Li S."/>
            <person name="Li H."/>
            <person name="Zhou J."/>
            <person name="Ni P."/>
            <person name="Dong W."/>
            <person name="Hu S."/>
            <person name="Zeng C."/>
            <person name="Zhang J."/>
            <person name="Zhang Y."/>
            <person name="Li R."/>
            <person name="Xu Z."/>
            <person name="Li S."/>
            <person name="Li X."/>
            <person name="Zheng H."/>
            <person name="Cong L."/>
            <person name="Lin L."/>
            <person name="Yin J."/>
            <person name="Geng J."/>
            <person name="Li G."/>
            <person name="Shi J."/>
            <person name="Liu J."/>
            <person name="Lv H."/>
            <person name="Li J."/>
            <person name="Wang J."/>
            <person name="Deng Y."/>
            <person name="Ran L."/>
            <person name="Shi X."/>
            <person name="Wang X."/>
            <person name="Wu Q."/>
            <person name="Li C."/>
            <person name="Ren X."/>
            <person name="Wang J."/>
            <person name="Wang X."/>
            <person name="Li D."/>
            <person name="Liu D."/>
            <person name="Zhang X."/>
            <person name="Ji Z."/>
            <person name="Zhao W."/>
            <person name="Sun Y."/>
            <person name="Zhang Z."/>
            <person name="Bao J."/>
            <person name="Han Y."/>
            <person name="Dong L."/>
            <person name="Ji J."/>
            <person name="Chen P."/>
            <person name="Wu S."/>
            <person name="Liu J."/>
            <person name="Xiao Y."/>
            <person name="Bu D."/>
            <person name="Tan J."/>
            <person name="Yang L."/>
            <person name="Ye C."/>
            <person name="Zhang J."/>
            <person name="Xu J."/>
            <person name="Zhou Y."/>
            <person name="Yu Y."/>
            <person name="Zhang B."/>
            <person name="Zhuang S."/>
            <person name="Wei H."/>
            <person name="Liu B."/>
            <person name="Lei M."/>
            <person name="Yu H."/>
            <person name="Li Y."/>
            <person name="Xu H."/>
            <person name="Wei S."/>
            <person name="He X."/>
            <person name="Fang L."/>
            <person name="Zhang Z."/>
            <person name="Zhang Y."/>
            <person name="Huang X."/>
            <person name="Su Z."/>
            <person name="Tong W."/>
            <person name="Li J."/>
            <person name="Tong Z."/>
            <person name="Li S."/>
            <person name="Ye J."/>
            <person name="Wang L."/>
            <person name="Fang L."/>
            <person name="Lei T."/>
            <person name="Chen C.-S."/>
            <person name="Chen H.-C."/>
            <person name="Xu Z."/>
            <person name="Li H."/>
            <person name="Huang H."/>
            <person name="Zhang F."/>
            <person name="Xu H."/>
            <person name="Li N."/>
            <person name="Zhao C."/>
            <person name="Li S."/>
            <person name="Dong L."/>
            <person name="Huang Y."/>
            <person name="Li L."/>
            <person name="Xi Y."/>
            <person name="Qi Q."/>
            <person name="Li W."/>
            <person name="Zhang B."/>
            <person name="Hu W."/>
            <person name="Zhang Y."/>
            <person name="Tian X."/>
            <person name="Jiao Y."/>
            <person name="Liang X."/>
            <person name="Jin J."/>
            <person name="Gao L."/>
            <person name="Zheng W."/>
            <person name="Hao B."/>
            <person name="Liu S.-M."/>
            <person name="Wang W."/>
            <person name="Yuan L."/>
            <person name="Cao M."/>
            <person name="McDermott J."/>
            <person name="Samudrala R."/>
            <person name="Wang J."/>
            <person name="Wong G.K.-S."/>
            <person name="Yang H."/>
        </authorList>
    </citation>
    <scope>NUCLEOTIDE SEQUENCE [LARGE SCALE GENOMIC DNA]</scope>
    <source>
        <strain>cv. 93-11</strain>
    </source>
</reference>
<evidence type="ECO:0000250" key="1"/>
<evidence type="ECO:0000255" key="2"/>
<evidence type="ECO:0000256" key="3">
    <source>
        <dbReference type="SAM" id="MobiDB-lite"/>
    </source>
</evidence>
<evidence type="ECO:0000305" key="4"/>
<dbReference type="EC" id="2.7.8.-"/>
<dbReference type="EMBL" id="CM000126">
    <property type="protein sequence ID" value="EEC71808.1"/>
    <property type="molecule type" value="Genomic_DNA"/>
</dbReference>
<dbReference type="STRING" id="39946.B8ACH9"/>
<dbReference type="EnsemblPlants" id="BGIOSGA004805-TA">
    <property type="protein sequence ID" value="BGIOSGA004805-PA"/>
    <property type="gene ID" value="BGIOSGA004805"/>
</dbReference>
<dbReference type="Gramene" id="BGIOSGA004805-TA">
    <property type="protein sequence ID" value="BGIOSGA004805-PA"/>
    <property type="gene ID" value="BGIOSGA004805"/>
</dbReference>
<dbReference type="HOGENOM" id="CLU_078641_1_0_1"/>
<dbReference type="OMA" id="ADNAMNG"/>
<dbReference type="Proteomes" id="UP000007015">
    <property type="component" value="Chromosome 1"/>
</dbReference>
<dbReference type="GO" id="GO:0005789">
    <property type="term" value="C:endoplasmic reticulum membrane"/>
    <property type="evidence" value="ECO:0007669"/>
    <property type="project" value="TreeGrafter"/>
</dbReference>
<dbReference type="GO" id="GO:0000139">
    <property type="term" value="C:Golgi membrane"/>
    <property type="evidence" value="ECO:0007669"/>
    <property type="project" value="TreeGrafter"/>
</dbReference>
<dbReference type="GO" id="GO:0005886">
    <property type="term" value="C:plasma membrane"/>
    <property type="evidence" value="ECO:0007669"/>
    <property type="project" value="TreeGrafter"/>
</dbReference>
<dbReference type="GO" id="GO:0005802">
    <property type="term" value="C:trans-Golgi network"/>
    <property type="evidence" value="ECO:0007669"/>
    <property type="project" value="TreeGrafter"/>
</dbReference>
<dbReference type="GO" id="GO:0047493">
    <property type="term" value="F:ceramide cholinephosphotransferase activity"/>
    <property type="evidence" value="ECO:0007669"/>
    <property type="project" value="TreeGrafter"/>
</dbReference>
<dbReference type="GO" id="GO:0045140">
    <property type="term" value="F:inositol phosphoceramide synthase activity"/>
    <property type="evidence" value="ECO:0007669"/>
    <property type="project" value="TreeGrafter"/>
</dbReference>
<dbReference type="GO" id="GO:0033188">
    <property type="term" value="F:sphingomyelin synthase activity"/>
    <property type="evidence" value="ECO:0007669"/>
    <property type="project" value="TreeGrafter"/>
</dbReference>
<dbReference type="GO" id="GO:0046513">
    <property type="term" value="P:ceramide biosynthetic process"/>
    <property type="evidence" value="ECO:0007669"/>
    <property type="project" value="TreeGrafter"/>
</dbReference>
<dbReference type="GO" id="GO:0006952">
    <property type="term" value="P:defense response"/>
    <property type="evidence" value="ECO:0007669"/>
    <property type="project" value="UniProtKB-KW"/>
</dbReference>
<dbReference type="InterPro" id="IPR045221">
    <property type="entry name" value="Sphingomyelin_synth-like"/>
</dbReference>
<dbReference type="InterPro" id="IPR025749">
    <property type="entry name" value="Sphingomyelin_synth-like_dom"/>
</dbReference>
<dbReference type="PANTHER" id="PTHR21290:SF64">
    <property type="entry name" value="PHOSPHATIDYLINOSITOL:CERAMIDE INOSITOLPHOSPHOTRANSFERASE"/>
    <property type="match status" value="1"/>
</dbReference>
<dbReference type="PANTHER" id="PTHR21290">
    <property type="entry name" value="SPHINGOMYELIN SYNTHETASE"/>
    <property type="match status" value="1"/>
</dbReference>
<dbReference type="Pfam" id="PF14360">
    <property type="entry name" value="PAP2_C"/>
    <property type="match status" value="1"/>
</dbReference>
<accession>B8ACH9</accession>
<gene>
    <name type="primary">ERH1</name>
    <name type="ORF">OsI_04443</name>
</gene>
<protein>
    <recommendedName>
        <fullName>Phosphatidylinositol:ceramide inositolphosphotransferase</fullName>
        <ecNumber>2.7.8.-</ecNumber>
    </recommendedName>
    <alternativeName>
        <fullName>Inositol-phosphorylceramide synthase</fullName>
        <shortName>IPC synthase</shortName>
    </alternativeName>
    <alternativeName>
        <fullName>Protein ENHANCING RPW8-MEDIATED HR-LIKE CELL DEATH 1</fullName>
    </alternativeName>
    <alternativeName>
        <fullName>Sphingolipid synthase</fullName>
    </alternativeName>
</protein>